<keyword id="KW-0028">Amino-acid biosynthesis</keyword>
<keyword id="KW-0368">Histidine biosynthesis</keyword>
<keyword id="KW-0378">Hydrolase</keyword>
<keyword id="KW-0486">Methionine biosynthesis</keyword>
<keyword id="KW-0511">Multifunctional enzyme</keyword>
<keyword id="KW-0521">NADP</keyword>
<keyword id="KW-0554">One-carbon metabolism</keyword>
<keyword id="KW-0560">Oxidoreductase</keyword>
<keyword id="KW-0658">Purine biosynthesis</keyword>
<proteinExistence type="inferred from homology"/>
<comment type="function">
    <text evidence="1">Catalyzes the oxidation of 5,10-methylenetetrahydrofolate to 5,10-methenyltetrahydrofolate and then the hydrolysis of 5,10-methenyltetrahydrofolate to 10-formyltetrahydrofolate.</text>
</comment>
<comment type="catalytic activity">
    <reaction evidence="1">
        <text>(6R)-5,10-methylene-5,6,7,8-tetrahydrofolate + NADP(+) = (6R)-5,10-methenyltetrahydrofolate + NADPH</text>
        <dbReference type="Rhea" id="RHEA:22812"/>
        <dbReference type="ChEBI" id="CHEBI:15636"/>
        <dbReference type="ChEBI" id="CHEBI:57455"/>
        <dbReference type="ChEBI" id="CHEBI:57783"/>
        <dbReference type="ChEBI" id="CHEBI:58349"/>
        <dbReference type="EC" id="1.5.1.5"/>
    </reaction>
</comment>
<comment type="catalytic activity">
    <reaction evidence="1">
        <text>(6R)-5,10-methenyltetrahydrofolate + H2O = (6R)-10-formyltetrahydrofolate + H(+)</text>
        <dbReference type="Rhea" id="RHEA:23700"/>
        <dbReference type="ChEBI" id="CHEBI:15377"/>
        <dbReference type="ChEBI" id="CHEBI:15378"/>
        <dbReference type="ChEBI" id="CHEBI:57455"/>
        <dbReference type="ChEBI" id="CHEBI:195366"/>
        <dbReference type="EC" id="3.5.4.9"/>
    </reaction>
</comment>
<comment type="pathway">
    <text evidence="1">One-carbon metabolism; tetrahydrofolate interconversion.</text>
</comment>
<comment type="subunit">
    <text evidence="1">Homodimer.</text>
</comment>
<comment type="similarity">
    <text evidence="1">Belongs to the tetrahydrofolate dehydrogenase/cyclohydrolase family.</text>
</comment>
<organism>
    <name type="scientific">Helicobacter acinonychis (strain Sheeba)</name>
    <dbReference type="NCBI Taxonomy" id="382638"/>
    <lineage>
        <taxon>Bacteria</taxon>
        <taxon>Pseudomonadati</taxon>
        <taxon>Campylobacterota</taxon>
        <taxon>Epsilonproteobacteria</taxon>
        <taxon>Campylobacterales</taxon>
        <taxon>Helicobacteraceae</taxon>
        <taxon>Helicobacter</taxon>
    </lineage>
</organism>
<feature type="chain" id="PRO_0000305825" description="Bifunctional protein FolD">
    <location>
        <begin position="1"/>
        <end position="292"/>
    </location>
</feature>
<feature type="binding site" evidence="1">
    <location>
        <begin position="171"/>
        <end position="173"/>
    </location>
    <ligand>
        <name>NADP(+)</name>
        <dbReference type="ChEBI" id="CHEBI:58349"/>
    </ligand>
</feature>
<feature type="binding site" evidence="1">
    <location>
        <position position="196"/>
    </location>
    <ligand>
        <name>NADP(+)</name>
        <dbReference type="ChEBI" id="CHEBI:58349"/>
    </ligand>
</feature>
<feature type="binding site" evidence="1">
    <location>
        <position position="237"/>
    </location>
    <ligand>
        <name>NADP(+)</name>
        <dbReference type="ChEBI" id="CHEBI:58349"/>
    </ligand>
</feature>
<sequence length="292" mass="31838">MGMPNKGVVLLDGQALAYNIEEDLKYKIQAINTQTHKRPKLAVILVGKDPASITYVNMKIKACERVGMDFDLKTLQENITEAQLLSLIKDYNNNQNISGVLVQLPLPRHIDSKMISEAIDPNKDVDGFHPLNIGKLCTQKESFLPATPMGVMRLLEHYHIGIKGKDVAIIGASNIIGKPLSMLMLNAGASVSVCHILTKDINFYTQNADIVCVGVGKPDLIKASMLKKGAVVVDIGINHLNDGRIVGDVDFTNAQKVASFITPVPKGVGPMTIVSLLENTLIAFEKQQRKGF</sequence>
<dbReference type="EC" id="1.5.1.5" evidence="1"/>
<dbReference type="EC" id="3.5.4.9" evidence="1"/>
<dbReference type="EMBL" id="AM260522">
    <property type="protein sequence ID" value="CAK00163.1"/>
    <property type="molecule type" value="Genomic_DNA"/>
</dbReference>
<dbReference type="SMR" id="Q17W13"/>
<dbReference type="STRING" id="382638.Hac_1435"/>
<dbReference type="KEGG" id="hac:Hac_1435"/>
<dbReference type="eggNOG" id="COG0190">
    <property type="taxonomic scope" value="Bacteria"/>
</dbReference>
<dbReference type="HOGENOM" id="CLU_034045_2_1_7"/>
<dbReference type="OrthoDB" id="9803580at2"/>
<dbReference type="BioCyc" id="HACI382638:HAC_RS06110-MONOMER"/>
<dbReference type="UniPathway" id="UPA00193"/>
<dbReference type="Proteomes" id="UP000000775">
    <property type="component" value="Chromosome"/>
</dbReference>
<dbReference type="GO" id="GO:0005829">
    <property type="term" value="C:cytosol"/>
    <property type="evidence" value="ECO:0007669"/>
    <property type="project" value="TreeGrafter"/>
</dbReference>
<dbReference type="GO" id="GO:0004477">
    <property type="term" value="F:methenyltetrahydrofolate cyclohydrolase activity"/>
    <property type="evidence" value="ECO:0007669"/>
    <property type="project" value="UniProtKB-UniRule"/>
</dbReference>
<dbReference type="GO" id="GO:0004488">
    <property type="term" value="F:methylenetetrahydrofolate dehydrogenase (NADP+) activity"/>
    <property type="evidence" value="ECO:0007669"/>
    <property type="project" value="UniProtKB-UniRule"/>
</dbReference>
<dbReference type="GO" id="GO:0000105">
    <property type="term" value="P:L-histidine biosynthetic process"/>
    <property type="evidence" value="ECO:0007669"/>
    <property type="project" value="UniProtKB-KW"/>
</dbReference>
<dbReference type="GO" id="GO:0009086">
    <property type="term" value="P:methionine biosynthetic process"/>
    <property type="evidence" value="ECO:0007669"/>
    <property type="project" value="UniProtKB-KW"/>
</dbReference>
<dbReference type="GO" id="GO:0006164">
    <property type="term" value="P:purine nucleotide biosynthetic process"/>
    <property type="evidence" value="ECO:0007669"/>
    <property type="project" value="UniProtKB-KW"/>
</dbReference>
<dbReference type="GO" id="GO:0035999">
    <property type="term" value="P:tetrahydrofolate interconversion"/>
    <property type="evidence" value="ECO:0007669"/>
    <property type="project" value="UniProtKB-UniRule"/>
</dbReference>
<dbReference type="CDD" id="cd01080">
    <property type="entry name" value="NAD_bind_m-THF_DH_Cyclohyd"/>
    <property type="match status" value="1"/>
</dbReference>
<dbReference type="FunFam" id="3.40.50.720:FF:000094">
    <property type="entry name" value="Bifunctional protein FolD"/>
    <property type="match status" value="1"/>
</dbReference>
<dbReference type="FunFam" id="3.40.50.10860:FF:000005">
    <property type="entry name" value="C-1-tetrahydrofolate synthase, cytoplasmic, putative"/>
    <property type="match status" value="1"/>
</dbReference>
<dbReference type="Gene3D" id="3.40.50.10860">
    <property type="entry name" value="Leucine Dehydrogenase, chain A, domain 1"/>
    <property type="match status" value="1"/>
</dbReference>
<dbReference type="Gene3D" id="3.40.50.720">
    <property type="entry name" value="NAD(P)-binding Rossmann-like Domain"/>
    <property type="match status" value="1"/>
</dbReference>
<dbReference type="HAMAP" id="MF_01576">
    <property type="entry name" value="THF_DHG_CYH"/>
    <property type="match status" value="1"/>
</dbReference>
<dbReference type="InterPro" id="IPR046346">
    <property type="entry name" value="Aminoacid_DH-like_N_sf"/>
</dbReference>
<dbReference type="InterPro" id="IPR036291">
    <property type="entry name" value="NAD(P)-bd_dom_sf"/>
</dbReference>
<dbReference type="InterPro" id="IPR000672">
    <property type="entry name" value="THF_DH/CycHdrlase"/>
</dbReference>
<dbReference type="InterPro" id="IPR020630">
    <property type="entry name" value="THF_DH/CycHdrlase_cat_dom"/>
</dbReference>
<dbReference type="InterPro" id="IPR020867">
    <property type="entry name" value="THF_DH/CycHdrlase_CS"/>
</dbReference>
<dbReference type="InterPro" id="IPR020631">
    <property type="entry name" value="THF_DH/CycHdrlase_NAD-bd_dom"/>
</dbReference>
<dbReference type="NCBIfam" id="NF010787">
    <property type="entry name" value="PRK14191.1"/>
    <property type="match status" value="1"/>
</dbReference>
<dbReference type="PANTHER" id="PTHR48099:SF5">
    <property type="entry name" value="C-1-TETRAHYDROFOLATE SYNTHASE, CYTOPLASMIC"/>
    <property type="match status" value="1"/>
</dbReference>
<dbReference type="PANTHER" id="PTHR48099">
    <property type="entry name" value="C-1-TETRAHYDROFOLATE SYNTHASE, CYTOPLASMIC-RELATED"/>
    <property type="match status" value="1"/>
</dbReference>
<dbReference type="Pfam" id="PF00763">
    <property type="entry name" value="THF_DHG_CYH"/>
    <property type="match status" value="1"/>
</dbReference>
<dbReference type="Pfam" id="PF02882">
    <property type="entry name" value="THF_DHG_CYH_C"/>
    <property type="match status" value="1"/>
</dbReference>
<dbReference type="PRINTS" id="PR00085">
    <property type="entry name" value="THFDHDRGNASE"/>
</dbReference>
<dbReference type="SUPFAM" id="SSF53223">
    <property type="entry name" value="Aminoacid dehydrogenase-like, N-terminal domain"/>
    <property type="match status" value="1"/>
</dbReference>
<dbReference type="SUPFAM" id="SSF51735">
    <property type="entry name" value="NAD(P)-binding Rossmann-fold domains"/>
    <property type="match status" value="1"/>
</dbReference>
<dbReference type="PROSITE" id="PS00766">
    <property type="entry name" value="THF_DHG_CYH_1"/>
    <property type="match status" value="1"/>
</dbReference>
<dbReference type="PROSITE" id="PS00767">
    <property type="entry name" value="THF_DHG_CYH_2"/>
    <property type="match status" value="1"/>
</dbReference>
<gene>
    <name evidence="1" type="primary">folD</name>
    <name type="ordered locus">Hac_1435</name>
</gene>
<protein>
    <recommendedName>
        <fullName evidence="1">Bifunctional protein FolD</fullName>
    </recommendedName>
    <domain>
        <recommendedName>
            <fullName evidence="1">Methylenetetrahydrofolate dehydrogenase</fullName>
            <ecNumber evidence="1">1.5.1.5</ecNumber>
        </recommendedName>
    </domain>
    <domain>
        <recommendedName>
            <fullName evidence="1">Methenyltetrahydrofolate cyclohydrolase</fullName>
            <ecNumber evidence="1">3.5.4.9</ecNumber>
        </recommendedName>
    </domain>
</protein>
<name>FOLD_HELAH</name>
<accession>Q17W13</accession>
<reference key="1">
    <citation type="journal article" date="2006" name="PLoS Genet.">
        <title>Who ate whom? Adaptive Helicobacter genomic changes that accompanied a host jump from early humans to large felines.</title>
        <authorList>
            <person name="Eppinger M."/>
            <person name="Baar C."/>
            <person name="Linz B."/>
            <person name="Raddatz G."/>
            <person name="Lanz C."/>
            <person name="Keller H."/>
            <person name="Morelli G."/>
            <person name="Gressmann H."/>
            <person name="Achtman M."/>
            <person name="Schuster S.C."/>
        </authorList>
    </citation>
    <scope>NUCLEOTIDE SEQUENCE [LARGE SCALE GENOMIC DNA]</scope>
    <source>
        <strain>Sheeba</strain>
    </source>
</reference>
<evidence type="ECO:0000255" key="1">
    <source>
        <dbReference type="HAMAP-Rule" id="MF_01576"/>
    </source>
</evidence>